<keyword id="KW-0240">DNA-directed RNA polymerase</keyword>
<keyword id="KW-0548">Nucleotidyltransferase</keyword>
<keyword id="KW-1185">Reference proteome</keyword>
<keyword id="KW-0804">Transcription</keyword>
<keyword id="KW-0808">Transferase</keyword>
<proteinExistence type="inferred from homology"/>
<comment type="function">
    <text evidence="1">Promotes RNA polymerase assembly. Latches the N- and C-terminal regions of the beta' subunit thereby facilitating its interaction with the beta and alpha subunits.</text>
</comment>
<comment type="catalytic activity">
    <reaction evidence="1">
        <text>RNA(n) + a ribonucleoside 5'-triphosphate = RNA(n+1) + diphosphate</text>
        <dbReference type="Rhea" id="RHEA:21248"/>
        <dbReference type="Rhea" id="RHEA-COMP:14527"/>
        <dbReference type="Rhea" id="RHEA-COMP:17342"/>
        <dbReference type="ChEBI" id="CHEBI:33019"/>
        <dbReference type="ChEBI" id="CHEBI:61557"/>
        <dbReference type="ChEBI" id="CHEBI:140395"/>
        <dbReference type="EC" id="2.7.7.6"/>
    </reaction>
</comment>
<comment type="subunit">
    <text evidence="1">The RNAP catalytic core consists of 2 alpha, 1 beta, 1 beta' and 1 omega subunit. When a sigma factor is associated with the core the holoenzyme is formed, which can initiate transcription.</text>
</comment>
<comment type="similarity">
    <text evidence="1">Belongs to the RNA polymerase subunit omega family.</text>
</comment>
<evidence type="ECO:0000255" key="1">
    <source>
        <dbReference type="HAMAP-Rule" id="MF_00366"/>
    </source>
</evidence>
<organism>
    <name type="scientific">Lactobacillus acidophilus (strain ATCC 700396 / NCK56 / N2 / NCFM)</name>
    <dbReference type="NCBI Taxonomy" id="272621"/>
    <lineage>
        <taxon>Bacteria</taxon>
        <taxon>Bacillati</taxon>
        <taxon>Bacillota</taxon>
        <taxon>Bacilli</taxon>
        <taxon>Lactobacillales</taxon>
        <taxon>Lactobacillaceae</taxon>
        <taxon>Lactobacillus</taxon>
    </lineage>
</organism>
<feature type="chain" id="PRO_0000237467" description="DNA-directed RNA polymerase subunit omega">
    <location>
        <begin position="1"/>
        <end position="74"/>
    </location>
</feature>
<dbReference type="EC" id="2.7.7.6" evidence="1"/>
<dbReference type="EMBL" id="CP000033">
    <property type="protein sequence ID" value="AAV43151.1"/>
    <property type="molecule type" value="Genomic_DNA"/>
</dbReference>
<dbReference type="RefSeq" id="WP_003547927.1">
    <property type="nucleotide sequence ID" value="NC_006814.3"/>
</dbReference>
<dbReference type="RefSeq" id="YP_194182.1">
    <property type="nucleotide sequence ID" value="NC_006814.3"/>
</dbReference>
<dbReference type="SMR" id="Q5FJH3"/>
<dbReference type="STRING" id="272621.LBA1324"/>
<dbReference type="GeneID" id="93289593"/>
<dbReference type="KEGG" id="lac:LBA1324"/>
<dbReference type="PATRIC" id="fig|272621.13.peg.1252"/>
<dbReference type="eggNOG" id="COG1758">
    <property type="taxonomic scope" value="Bacteria"/>
</dbReference>
<dbReference type="HOGENOM" id="CLU_125406_6_0_9"/>
<dbReference type="OrthoDB" id="9815459at2"/>
<dbReference type="BioCyc" id="LACI272621:G1G49-1301-MONOMER"/>
<dbReference type="PRO" id="PR:Q5FJH3"/>
<dbReference type="Proteomes" id="UP000006381">
    <property type="component" value="Chromosome"/>
</dbReference>
<dbReference type="GO" id="GO:0000428">
    <property type="term" value="C:DNA-directed RNA polymerase complex"/>
    <property type="evidence" value="ECO:0007669"/>
    <property type="project" value="UniProtKB-KW"/>
</dbReference>
<dbReference type="GO" id="GO:0003677">
    <property type="term" value="F:DNA binding"/>
    <property type="evidence" value="ECO:0007669"/>
    <property type="project" value="UniProtKB-UniRule"/>
</dbReference>
<dbReference type="GO" id="GO:0003899">
    <property type="term" value="F:DNA-directed RNA polymerase activity"/>
    <property type="evidence" value="ECO:0007669"/>
    <property type="project" value="UniProtKB-UniRule"/>
</dbReference>
<dbReference type="GO" id="GO:0006351">
    <property type="term" value="P:DNA-templated transcription"/>
    <property type="evidence" value="ECO:0007669"/>
    <property type="project" value="UniProtKB-UniRule"/>
</dbReference>
<dbReference type="Gene3D" id="3.90.940.10">
    <property type="match status" value="1"/>
</dbReference>
<dbReference type="HAMAP" id="MF_00366">
    <property type="entry name" value="RNApol_bact_RpoZ"/>
    <property type="match status" value="1"/>
</dbReference>
<dbReference type="InterPro" id="IPR003716">
    <property type="entry name" value="DNA-dir_RNA_pol_omega"/>
</dbReference>
<dbReference type="InterPro" id="IPR006110">
    <property type="entry name" value="Pol_omega/Rpo6/RPB6"/>
</dbReference>
<dbReference type="InterPro" id="IPR036161">
    <property type="entry name" value="RPB6/omega-like_sf"/>
</dbReference>
<dbReference type="NCBIfam" id="TIGR00690">
    <property type="entry name" value="rpoZ"/>
    <property type="match status" value="1"/>
</dbReference>
<dbReference type="PANTHER" id="PTHR34476">
    <property type="entry name" value="DNA-DIRECTED RNA POLYMERASE SUBUNIT OMEGA"/>
    <property type="match status" value="1"/>
</dbReference>
<dbReference type="PANTHER" id="PTHR34476:SF1">
    <property type="entry name" value="DNA-DIRECTED RNA POLYMERASE SUBUNIT OMEGA"/>
    <property type="match status" value="1"/>
</dbReference>
<dbReference type="Pfam" id="PF01192">
    <property type="entry name" value="RNA_pol_Rpb6"/>
    <property type="match status" value="1"/>
</dbReference>
<dbReference type="SMART" id="SM01409">
    <property type="entry name" value="RNA_pol_Rpb6"/>
    <property type="match status" value="1"/>
</dbReference>
<dbReference type="SUPFAM" id="SSF63562">
    <property type="entry name" value="RPB6/omega subunit-like"/>
    <property type="match status" value="1"/>
</dbReference>
<sequence length="74" mass="8088">MRITYPSIDKLLSRVDSRYSLSVLAAKRAHELEAGDPPTLEHFKCDKAVGKALEEIAAGKVTVDPAHAEVNLED</sequence>
<name>RPOZ_LACAC</name>
<accession>Q5FJH3</accession>
<gene>
    <name evidence="1" type="primary">rpoZ</name>
    <name type="ordered locus">LBA1324</name>
</gene>
<reference key="1">
    <citation type="journal article" date="2005" name="Proc. Natl. Acad. Sci. U.S.A.">
        <title>Complete genome sequence of the probiotic lactic acid bacterium Lactobacillus acidophilus NCFM.</title>
        <authorList>
            <person name="Altermann E."/>
            <person name="Russell W.M."/>
            <person name="Azcarate-Peril M.A."/>
            <person name="Barrangou R."/>
            <person name="Buck B.L."/>
            <person name="McAuliffe O."/>
            <person name="Souther N."/>
            <person name="Dobson A."/>
            <person name="Duong T."/>
            <person name="Callanan M."/>
            <person name="Lick S."/>
            <person name="Hamrick A."/>
            <person name="Cano R."/>
            <person name="Klaenhammer T.R."/>
        </authorList>
    </citation>
    <scope>NUCLEOTIDE SEQUENCE [LARGE SCALE GENOMIC DNA]</scope>
    <source>
        <strain>ATCC 700396 / NCK56 / N2 / NCFM</strain>
    </source>
</reference>
<protein>
    <recommendedName>
        <fullName evidence="1">DNA-directed RNA polymerase subunit omega</fullName>
        <shortName evidence="1">RNAP omega subunit</shortName>
        <ecNumber evidence="1">2.7.7.6</ecNumber>
    </recommendedName>
    <alternativeName>
        <fullName evidence="1">RNA polymerase omega subunit</fullName>
    </alternativeName>
    <alternativeName>
        <fullName evidence="1">Transcriptase subunit omega</fullName>
    </alternativeName>
</protein>